<keyword id="KW-1185">Reference proteome</keyword>
<keyword id="KW-0687">Ribonucleoprotein</keyword>
<keyword id="KW-0689">Ribosomal protein</keyword>
<feature type="chain" id="PRO_1000132643" description="Small ribosomal subunit protein uS2">
    <location>
        <begin position="1"/>
        <end position="250"/>
    </location>
</feature>
<organism>
    <name type="scientific">Acidovorax ebreus (strain TPSY)</name>
    <name type="common">Diaphorobacter sp. (strain TPSY)</name>
    <dbReference type="NCBI Taxonomy" id="535289"/>
    <lineage>
        <taxon>Bacteria</taxon>
        <taxon>Pseudomonadati</taxon>
        <taxon>Pseudomonadota</taxon>
        <taxon>Betaproteobacteria</taxon>
        <taxon>Burkholderiales</taxon>
        <taxon>Comamonadaceae</taxon>
        <taxon>Diaphorobacter</taxon>
    </lineage>
</organism>
<gene>
    <name evidence="1" type="primary">rpsB</name>
    <name type="ordered locus">Dtpsy_1223</name>
</gene>
<comment type="similarity">
    <text evidence="1">Belongs to the universal ribosomal protein uS2 family.</text>
</comment>
<proteinExistence type="inferred from homology"/>
<accession>B9MGL7</accession>
<dbReference type="EMBL" id="CP001392">
    <property type="protein sequence ID" value="ACM32690.1"/>
    <property type="molecule type" value="Genomic_DNA"/>
</dbReference>
<dbReference type="RefSeq" id="WP_015912864.1">
    <property type="nucleotide sequence ID" value="NC_011992.1"/>
</dbReference>
<dbReference type="SMR" id="B9MGL7"/>
<dbReference type="GeneID" id="84682032"/>
<dbReference type="KEGG" id="dia:Dtpsy_1223"/>
<dbReference type="eggNOG" id="COG0052">
    <property type="taxonomic scope" value="Bacteria"/>
</dbReference>
<dbReference type="HOGENOM" id="CLU_040318_2_3_4"/>
<dbReference type="Proteomes" id="UP000000450">
    <property type="component" value="Chromosome"/>
</dbReference>
<dbReference type="GO" id="GO:0022627">
    <property type="term" value="C:cytosolic small ribosomal subunit"/>
    <property type="evidence" value="ECO:0007669"/>
    <property type="project" value="TreeGrafter"/>
</dbReference>
<dbReference type="GO" id="GO:0003735">
    <property type="term" value="F:structural constituent of ribosome"/>
    <property type="evidence" value="ECO:0007669"/>
    <property type="project" value="InterPro"/>
</dbReference>
<dbReference type="GO" id="GO:0006412">
    <property type="term" value="P:translation"/>
    <property type="evidence" value="ECO:0007669"/>
    <property type="project" value="UniProtKB-UniRule"/>
</dbReference>
<dbReference type="CDD" id="cd01425">
    <property type="entry name" value="RPS2"/>
    <property type="match status" value="1"/>
</dbReference>
<dbReference type="FunFam" id="1.10.287.610:FF:000001">
    <property type="entry name" value="30S ribosomal protein S2"/>
    <property type="match status" value="1"/>
</dbReference>
<dbReference type="Gene3D" id="3.40.50.10490">
    <property type="entry name" value="Glucose-6-phosphate isomerase like protein, domain 1"/>
    <property type="match status" value="1"/>
</dbReference>
<dbReference type="Gene3D" id="1.10.287.610">
    <property type="entry name" value="Helix hairpin bin"/>
    <property type="match status" value="1"/>
</dbReference>
<dbReference type="HAMAP" id="MF_00291_B">
    <property type="entry name" value="Ribosomal_uS2_B"/>
    <property type="match status" value="1"/>
</dbReference>
<dbReference type="InterPro" id="IPR001865">
    <property type="entry name" value="Ribosomal_uS2"/>
</dbReference>
<dbReference type="InterPro" id="IPR005706">
    <property type="entry name" value="Ribosomal_uS2_bac/mit/plastid"/>
</dbReference>
<dbReference type="InterPro" id="IPR018130">
    <property type="entry name" value="Ribosomal_uS2_CS"/>
</dbReference>
<dbReference type="InterPro" id="IPR023591">
    <property type="entry name" value="Ribosomal_uS2_flav_dom_sf"/>
</dbReference>
<dbReference type="NCBIfam" id="TIGR01011">
    <property type="entry name" value="rpsB_bact"/>
    <property type="match status" value="1"/>
</dbReference>
<dbReference type="PANTHER" id="PTHR12534">
    <property type="entry name" value="30S RIBOSOMAL PROTEIN S2 PROKARYOTIC AND ORGANELLAR"/>
    <property type="match status" value="1"/>
</dbReference>
<dbReference type="PANTHER" id="PTHR12534:SF0">
    <property type="entry name" value="SMALL RIBOSOMAL SUBUNIT PROTEIN US2M"/>
    <property type="match status" value="1"/>
</dbReference>
<dbReference type="Pfam" id="PF00318">
    <property type="entry name" value="Ribosomal_S2"/>
    <property type="match status" value="1"/>
</dbReference>
<dbReference type="PRINTS" id="PR00395">
    <property type="entry name" value="RIBOSOMALS2"/>
</dbReference>
<dbReference type="SUPFAM" id="SSF52313">
    <property type="entry name" value="Ribosomal protein S2"/>
    <property type="match status" value="1"/>
</dbReference>
<dbReference type="PROSITE" id="PS00962">
    <property type="entry name" value="RIBOSOMAL_S2_1"/>
    <property type="match status" value="1"/>
</dbReference>
<reference key="1">
    <citation type="submission" date="2009-01" db="EMBL/GenBank/DDBJ databases">
        <title>Complete sequence of Diaphorobacter sp. TPSY.</title>
        <authorList>
            <consortium name="US DOE Joint Genome Institute"/>
            <person name="Lucas S."/>
            <person name="Copeland A."/>
            <person name="Lapidus A."/>
            <person name="Glavina del Rio T."/>
            <person name="Tice H."/>
            <person name="Bruce D."/>
            <person name="Goodwin L."/>
            <person name="Pitluck S."/>
            <person name="Chertkov O."/>
            <person name="Brettin T."/>
            <person name="Detter J.C."/>
            <person name="Han C."/>
            <person name="Larimer F."/>
            <person name="Land M."/>
            <person name="Hauser L."/>
            <person name="Kyrpides N."/>
            <person name="Mikhailova N."/>
            <person name="Coates J.D."/>
        </authorList>
    </citation>
    <scope>NUCLEOTIDE SEQUENCE [LARGE SCALE GENOMIC DNA]</scope>
    <source>
        <strain>TPSY</strain>
    </source>
</reference>
<evidence type="ECO:0000255" key="1">
    <source>
        <dbReference type="HAMAP-Rule" id="MF_00291"/>
    </source>
</evidence>
<evidence type="ECO:0000305" key="2"/>
<name>RS2_ACIET</name>
<protein>
    <recommendedName>
        <fullName evidence="1">Small ribosomal subunit protein uS2</fullName>
    </recommendedName>
    <alternativeName>
        <fullName evidence="2">30S ribosomal protein S2</fullName>
    </alternativeName>
</protein>
<sequence>MSVTMREMLEAGVHFGHQTRFWNPKMAPFIFGHRNKIHIINLEKSLPMFQEAQKFAKQLAANRGTILMVGTKRQARELVAEQAQRAGVPYVDQRWLGGMLTNFKTVKTSIKRLKDMKAQQEAGLESMSKKEQLMFSRELEKLEKDIGGIQDMAALPDAIFVIDVGYHKIAVSEAKKLGIPLIGVVDSNHSPEGIDYVIPGNDDSAKAVALYARGIADAILDGRANAVTEVAKAVAAEGSDEFVEVDENAA</sequence>